<organism>
    <name type="scientific">Methanosphaera stadtmanae (strain ATCC 43021 / DSM 3091 / JCM 11832 / MCB-3)</name>
    <dbReference type="NCBI Taxonomy" id="339860"/>
    <lineage>
        <taxon>Archaea</taxon>
        <taxon>Methanobacteriati</taxon>
        <taxon>Methanobacteriota</taxon>
        <taxon>Methanomada group</taxon>
        <taxon>Methanobacteria</taxon>
        <taxon>Methanobacteriales</taxon>
        <taxon>Methanobacteriaceae</taxon>
        <taxon>Methanosphaera</taxon>
    </lineage>
</organism>
<name>MNTP_METST</name>
<proteinExistence type="inferred from homology"/>
<evidence type="ECO:0000255" key="1">
    <source>
        <dbReference type="HAMAP-Rule" id="MF_01521"/>
    </source>
</evidence>
<gene>
    <name evidence="1" type="primary">mntP</name>
    <name type="ordered locus">Msp_0741</name>
</gene>
<reference key="1">
    <citation type="journal article" date="2006" name="J. Bacteriol.">
        <title>The genome sequence of Methanosphaera stadtmanae reveals why this human intestinal archaeon is restricted to methanol and H2 for methane formation and ATP synthesis.</title>
        <authorList>
            <person name="Fricke W.F."/>
            <person name="Seedorf H."/>
            <person name="Henne A."/>
            <person name="Kruer M."/>
            <person name="Liesegang H."/>
            <person name="Hedderich R."/>
            <person name="Gottschalk G."/>
            <person name="Thauer R.K."/>
        </authorList>
    </citation>
    <scope>NUCLEOTIDE SEQUENCE [LARGE SCALE GENOMIC DNA]</scope>
    <source>
        <strain>ATCC 43021 / DSM 3091 / JCM 11832 / MCB-3</strain>
    </source>
</reference>
<comment type="function">
    <text evidence="1">Probably functions as a manganese efflux pump.</text>
</comment>
<comment type="subcellular location">
    <subcellularLocation>
        <location evidence="1">Cell membrane</location>
        <topology evidence="1">Multi-pass membrane protein</topology>
    </subcellularLocation>
</comment>
<comment type="similarity">
    <text evidence="1">Belongs to the MntP (TC 9.B.29) family.</text>
</comment>
<dbReference type="EMBL" id="CP000102">
    <property type="protein sequence ID" value="ABC57139.1"/>
    <property type="molecule type" value="Genomic_DNA"/>
</dbReference>
<dbReference type="STRING" id="339860.Msp_0741"/>
<dbReference type="KEGG" id="mst:Msp_0741"/>
<dbReference type="eggNOG" id="arCOG04898">
    <property type="taxonomic scope" value="Archaea"/>
</dbReference>
<dbReference type="HOGENOM" id="CLU_096410_3_0_2"/>
<dbReference type="Proteomes" id="UP000001931">
    <property type="component" value="Chromosome"/>
</dbReference>
<dbReference type="GO" id="GO:0005886">
    <property type="term" value="C:plasma membrane"/>
    <property type="evidence" value="ECO:0007669"/>
    <property type="project" value="UniProtKB-SubCell"/>
</dbReference>
<dbReference type="GO" id="GO:0005384">
    <property type="term" value="F:manganese ion transmembrane transporter activity"/>
    <property type="evidence" value="ECO:0007669"/>
    <property type="project" value="UniProtKB-UniRule"/>
</dbReference>
<dbReference type="HAMAP" id="MF_01521">
    <property type="entry name" value="MntP_pump"/>
    <property type="match status" value="1"/>
</dbReference>
<dbReference type="InterPro" id="IPR003810">
    <property type="entry name" value="Mntp/YtaF"/>
</dbReference>
<dbReference type="InterPro" id="IPR022929">
    <property type="entry name" value="Put_MntP"/>
</dbReference>
<dbReference type="PANTHER" id="PTHR35529">
    <property type="entry name" value="MANGANESE EFFLUX PUMP MNTP-RELATED"/>
    <property type="match status" value="1"/>
</dbReference>
<dbReference type="PANTHER" id="PTHR35529:SF1">
    <property type="entry name" value="MANGANESE EFFLUX PUMP MNTP-RELATED"/>
    <property type="match status" value="1"/>
</dbReference>
<dbReference type="Pfam" id="PF02659">
    <property type="entry name" value="Mntp"/>
    <property type="match status" value="1"/>
</dbReference>
<protein>
    <recommendedName>
        <fullName evidence="1">Putative manganese efflux pump MntP</fullName>
    </recommendedName>
</protein>
<accession>Q2NGB4</accession>
<keyword id="KW-1003">Cell membrane</keyword>
<keyword id="KW-0406">Ion transport</keyword>
<keyword id="KW-0464">Manganese</keyword>
<keyword id="KW-0472">Membrane</keyword>
<keyword id="KW-1185">Reference proteome</keyword>
<keyword id="KW-0812">Transmembrane</keyword>
<keyword id="KW-1133">Transmembrane helix</keyword>
<keyword id="KW-0813">Transport</keyword>
<sequence>MLSVILLAIALAMDAFSISITKGFTQKKIQKQEILWYGIFFGGFQCFMPIIGYVCGTTIRSFISTYAPWIAFILLLCIGLNMIRESITSSDEKVADIFSFKEVTLLAIATSIDAFAVGVTFAILNISLVIPCAIIGIITFLFSIVGIFIGKKLGDYFGDKFQILGGVILILLGFKILLGF</sequence>
<feature type="chain" id="PRO_0000292549" description="Putative manganese efflux pump MntP">
    <location>
        <begin position="1"/>
        <end position="180"/>
    </location>
</feature>
<feature type="transmembrane region" description="Helical" evidence="1">
    <location>
        <begin position="1"/>
        <end position="21"/>
    </location>
</feature>
<feature type="transmembrane region" description="Helical" evidence="1">
    <location>
        <begin position="34"/>
        <end position="54"/>
    </location>
</feature>
<feature type="transmembrane region" description="Helical" evidence="1">
    <location>
        <begin position="63"/>
        <end position="83"/>
    </location>
</feature>
<feature type="transmembrane region" description="Helical" evidence="1">
    <location>
        <begin position="103"/>
        <end position="123"/>
    </location>
</feature>
<feature type="transmembrane region" description="Helical" evidence="1">
    <location>
        <begin position="129"/>
        <end position="149"/>
    </location>
</feature>
<feature type="transmembrane region" description="Helical" evidence="1">
    <location>
        <begin position="160"/>
        <end position="180"/>
    </location>
</feature>